<feature type="chain" id="PRO_0000292433" description="Homeobox protein orthopedia B">
    <location>
        <begin position="1"/>
        <end position="315"/>
    </location>
</feature>
<feature type="DNA-binding region" description="Homeobox" evidence="1">
    <location>
        <begin position="99"/>
        <end position="158"/>
    </location>
</feature>
<feature type="region of interest" description="Disordered" evidence="3">
    <location>
        <begin position="33"/>
        <end position="105"/>
    </location>
</feature>
<feature type="short sequence motif" description="OAR" evidence="2">
    <location>
        <begin position="296"/>
        <end position="309"/>
    </location>
</feature>
<feature type="compositionally biased region" description="Low complexity" evidence="3">
    <location>
        <begin position="72"/>
        <end position="97"/>
    </location>
</feature>
<feature type="splice variant" id="VSP_026418" description="In isoform 2." evidence="7">
    <original>G</original>
    <variation>GELSPPNSGLQLHW</variation>
    <location>
        <position position="13"/>
    </location>
</feature>
<dbReference type="EMBL" id="AF071496">
    <property type="protein sequence ID" value="AAD42021.1"/>
    <property type="molecule type" value="mRNA"/>
</dbReference>
<dbReference type="EMBL" id="BC076366">
    <property type="protein sequence ID" value="AAH76366.1"/>
    <property type="molecule type" value="mRNA"/>
</dbReference>
<dbReference type="RefSeq" id="NP_001410779.1">
    <molecule id="Q6DGH9-1"/>
    <property type="nucleotide sequence ID" value="NM_001423850.1"/>
</dbReference>
<dbReference type="RefSeq" id="NP_571175.1">
    <molecule id="Q6DGH9-2"/>
    <property type="nucleotide sequence ID" value="NM_131100.2"/>
</dbReference>
<dbReference type="RefSeq" id="XP_005165562.1">
    <property type="nucleotide sequence ID" value="XM_005165505.2"/>
</dbReference>
<dbReference type="SMR" id="Q6DGH9"/>
<dbReference type="FunCoup" id="Q6DGH9">
    <property type="interactions" value="2"/>
</dbReference>
<dbReference type="STRING" id="7955.ENSDARP00000122985"/>
<dbReference type="PaxDb" id="7955-ENSDARP00000122985"/>
<dbReference type="Ensembl" id="ENSDART00000081249">
    <molecule id="Q6DGH9-1"/>
    <property type="protein sequence ID" value="ENSDARP00000075692"/>
    <property type="gene ID" value="ENSDARG00000058379"/>
</dbReference>
<dbReference type="GeneID" id="30316"/>
<dbReference type="KEGG" id="dre:30316"/>
<dbReference type="AGR" id="ZFIN:ZDB-GENE-990708-7"/>
<dbReference type="CTD" id="30316"/>
<dbReference type="ZFIN" id="ZDB-GENE-990708-7">
    <property type="gene designation" value="otpb"/>
</dbReference>
<dbReference type="eggNOG" id="KOG0490">
    <property type="taxonomic scope" value="Eukaryota"/>
</dbReference>
<dbReference type="HOGENOM" id="CLU_056068_0_0_1"/>
<dbReference type="InParanoid" id="Q6DGH9"/>
<dbReference type="OMA" id="DTGHPGD"/>
<dbReference type="OrthoDB" id="6159439at2759"/>
<dbReference type="PhylomeDB" id="Q6DGH9"/>
<dbReference type="TreeFam" id="TF351614"/>
<dbReference type="PRO" id="PR:Q6DGH9"/>
<dbReference type="Proteomes" id="UP000000437">
    <property type="component" value="Chromosome 5"/>
</dbReference>
<dbReference type="Bgee" id="ENSDARG00000058379">
    <property type="expression patterns" value="Expressed in forebrain and 55 other cell types or tissues"/>
</dbReference>
<dbReference type="ExpressionAtlas" id="Q6DGH9">
    <property type="expression patterns" value="baseline"/>
</dbReference>
<dbReference type="GO" id="GO:0005634">
    <property type="term" value="C:nucleus"/>
    <property type="evidence" value="ECO:0007669"/>
    <property type="project" value="UniProtKB-SubCell"/>
</dbReference>
<dbReference type="GO" id="GO:0003677">
    <property type="term" value="F:DNA binding"/>
    <property type="evidence" value="ECO:0000318"/>
    <property type="project" value="GO_Central"/>
</dbReference>
<dbReference type="GO" id="GO:0000981">
    <property type="term" value="F:DNA-binding transcription factor activity, RNA polymerase II-specific"/>
    <property type="evidence" value="ECO:0007669"/>
    <property type="project" value="InterPro"/>
</dbReference>
<dbReference type="GO" id="GO:0021884">
    <property type="term" value="P:forebrain neuron development"/>
    <property type="evidence" value="ECO:0000316"/>
    <property type="project" value="ZFIN"/>
</dbReference>
<dbReference type="GO" id="GO:0021854">
    <property type="term" value="P:hypothalamus development"/>
    <property type="evidence" value="ECO:0000315"/>
    <property type="project" value="ZFIN"/>
</dbReference>
<dbReference type="GO" id="GO:0021767">
    <property type="term" value="P:mammillary body development"/>
    <property type="evidence" value="ECO:0000316"/>
    <property type="project" value="ZFIN"/>
</dbReference>
<dbReference type="GO" id="GO:0030182">
    <property type="term" value="P:neuron differentiation"/>
    <property type="evidence" value="ECO:0000315"/>
    <property type="project" value="ZFIN"/>
</dbReference>
<dbReference type="CDD" id="cd00086">
    <property type="entry name" value="homeodomain"/>
    <property type="match status" value="1"/>
</dbReference>
<dbReference type="FunFam" id="1.10.10.60:FF:000124">
    <property type="entry name" value="Orthopedia homeobox b"/>
    <property type="match status" value="1"/>
</dbReference>
<dbReference type="Gene3D" id="1.10.10.60">
    <property type="entry name" value="Homeodomain-like"/>
    <property type="match status" value="1"/>
</dbReference>
<dbReference type="InterPro" id="IPR001356">
    <property type="entry name" value="HD"/>
</dbReference>
<dbReference type="InterPro" id="IPR017970">
    <property type="entry name" value="Homeobox_CS"/>
</dbReference>
<dbReference type="InterPro" id="IPR009057">
    <property type="entry name" value="Homeodomain-like_sf"/>
</dbReference>
<dbReference type="InterPro" id="IPR000047">
    <property type="entry name" value="HTH_motif"/>
</dbReference>
<dbReference type="InterPro" id="IPR003654">
    <property type="entry name" value="OAR_dom"/>
</dbReference>
<dbReference type="InterPro" id="IPR051895">
    <property type="entry name" value="OTP_Homeobox"/>
</dbReference>
<dbReference type="PANTHER" id="PTHR46770">
    <property type="entry name" value="HOMEOBOX PROTEIN ORTHOPEDIA"/>
    <property type="match status" value="1"/>
</dbReference>
<dbReference type="PANTHER" id="PTHR46770:SF1">
    <property type="entry name" value="HOMEOBOX PROTEIN ORTHOPEDIA"/>
    <property type="match status" value="1"/>
</dbReference>
<dbReference type="Pfam" id="PF00046">
    <property type="entry name" value="Homeodomain"/>
    <property type="match status" value="1"/>
</dbReference>
<dbReference type="Pfam" id="PF03826">
    <property type="entry name" value="OAR"/>
    <property type="match status" value="1"/>
</dbReference>
<dbReference type="PRINTS" id="PR00031">
    <property type="entry name" value="HTHREPRESSR"/>
</dbReference>
<dbReference type="SMART" id="SM00389">
    <property type="entry name" value="HOX"/>
    <property type="match status" value="1"/>
</dbReference>
<dbReference type="SUPFAM" id="SSF46689">
    <property type="entry name" value="Homeodomain-like"/>
    <property type="match status" value="1"/>
</dbReference>
<dbReference type="PROSITE" id="PS00027">
    <property type="entry name" value="HOMEOBOX_1"/>
    <property type="match status" value="1"/>
</dbReference>
<dbReference type="PROSITE" id="PS50071">
    <property type="entry name" value="HOMEOBOX_2"/>
    <property type="match status" value="1"/>
</dbReference>
<dbReference type="PROSITE" id="PS50803">
    <property type="entry name" value="OAR"/>
    <property type="match status" value="1"/>
</dbReference>
<name>OTBP_DANRE</name>
<accession>Q6DGH9</accession>
<accession>Q9W7M5</accession>
<organism>
    <name type="scientific">Danio rerio</name>
    <name type="common">Zebrafish</name>
    <name type="synonym">Brachydanio rerio</name>
    <dbReference type="NCBI Taxonomy" id="7955"/>
    <lineage>
        <taxon>Eukaryota</taxon>
        <taxon>Metazoa</taxon>
        <taxon>Chordata</taxon>
        <taxon>Craniata</taxon>
        <taxon>Vertebrata</taxon>
        <taxon>Euteleostomi</taxon>
        <taxon>Actinopterygii</taxon>
        <taxon>Neopterygii</taxon>
        <taxon>Teleostei</taxon>
        <taxon>Ostariophysi</taxon>
        <taxon>Cypriniformes</taxon>
        <taxon>Danionidae</taxon>
        <taxon>Danioninae</taxon>
        <taxon>Danio</taxon>
    </lineage>
</organism>
<sequence>MLSHADLLDTRLGMKDAAAELLVHREALKCRLGGTDSGHPGDLTSATETVEGTTLLPGEEISNGGSNPNGMQQVNAKDQEKQQQQNSNQTGGQQNQQKQKRHRTRFTPAQLNELERSFAKTHYPDIFMREELALRIGLTESRVQVWFQNRRAKWKKRKKTTNVFRAPGTLLPTHGLPQFPSAAAAAMGDSLCSFHANDTRWAAAGMPGVSQLQIPPSLGRQQAMAQSLSQCSLGAGPPPNNMGLSGSLSSNGSGLQSHLYQPTFPGMVPASLSGPTNVTGSPQLCSSPDSDMWRGTSIASLRRKALEHTVSMSFT</sequence>
<proteinExistence type="evidence at protein level"/>
<protein>
    <recommendedName>
        <fullName>Homeobox protein orthopedia B</fullName>
    </recommendedName>
</protein>
<evidence type="ECO:0000255" key="1">
    <source>
        <dbReference type="PROSITE-ProRule" id="PRU00108"/>
    </source>
</evidence>
<evidence type="ECO:0000255" key="2">
    <source>
        <dbReference type="PROSITE-ProRule" id="PRU00138"/>
    </source>
</evidence>
<evidence type="ECO:0000256" key="3">
    <source>
        <dbReference type="SAM" id="MobiDB-lite"/>
    </source>
</evidence>
<evidence type="ECO:0000269" key="4">
    <source>
    </source>
</evidence>
<evidence type="ECO:0000269" key="5">
    <source>
    </source>
</evidence>
<evidence type="ECO:0000269" key="6">
    <source>
    </source>
</evidence>
<evidence type="ECO:0000303" key="7">
    <source>
    </source>
</evidence>
<evidence type="ECO:0000305" key="8"/>
<keyword id="KW-0025">Alternative splicing</keyword>
<keyword id="KW-0217">Developmental protein</keyword>
<keyword id="KW-0221">Differentiation</keyword>
<keyword id="KW-0238">DNA-binding</keyword>
<keyword id="KW-0371">Homeobox</keyword>
<keyword id="KW-0524">Neurogenesis</keyword>
<keyword id="KW-0539">Nucleus</keyword>
<keyword id="KW-1185">Reference proteome</keyword>
<keyword id="KW-0804">Transcription</keyword>
<keyword id="KW-0805">Transcription regulation</keyword>
<comment type="function">
    <text evidence="5 6">Involved in the specification of isotocin cells. Required for the specification of dopaminergic neurons in the developing hypothalamus and posterior tuberculum.</text>
</comment>
<comment type="subcellular location">
    <subcellularLocation>
        <location evidence="1 2 5">Nucleus</location>
    </subcellularLocation>
</comment>
<comment type="alternative products">
    <event type="alternative splicing"/>
    <isoform>
        <id>Q6DGH9-1</id>
        <name>1</name>
        <sequence type="displayed"/>
    </isoform>
    <isoform>
        <id>Q6DGH9-2</id>
        <name>2</name>
        <sequence type="described" ref="VSP_026418"/>
    </isoform>
</comment>
<comment type="tissue specificity">
    <text evidence="4">Isoform 1 and isoform 2 are expressed in brain and testis.</text>
</comment>
<comment type="developmental stage">
    <text evidence="4 5">Isoform 1 and isoform 2 are expressed during embryonic development. At 16 hpf, expressed in a few cells in the ventral dieencephalon. At 48 hpf, present in the preoptic area and ventral hypothalamus (at protein level).</text>
</comment>
<comment type="miscellaneous">
    <molecule>Isoform 2</molecule>
    <text evidence="8">Characteristic of the fish lineage.</text>
</comment>
<comment type="similarity">
    <text evidence="8">Belongs to the paired homeobox family. Bicoid subfamily.</text>
</comment>
<reference key="1">
    <citation type="journal article" date="2006" name="BMC Dev. Biol.">
        <title>Differential regulation of the zebrafish orthopedia 1 gene during fate determination of diencephalic neurons.</title>
        <authorList>
            <person name="Del Giacco L."/>
            <person name="Sordino P."/>
            <person name="Pistocchi A."/>
            <person name="Andreakis N."/>
            <person name="Tarallo R."/>
            <person name="Di Benedetto B."/>
            <person name="Cotelli F."/>
        </authorList>
    </citation>
    <scope>NUCLEOTIDE SEQUENCE [MRNA] (ISOFORMS 1 AND 2)</scope>
    <scope>TISSUE SPECIFICITY</scope>
    <scope>DEVELOPMENTAL STAGE</scope>
    <source>
        <tissue>Embryo</tissue>
    </source>
</reference>
<reference key="2">
    <citation type="submission" date="2004-07" db="EMBL/GenBank/DDBJ databases">
        <authorList>
            <consortium name="NIH - Zebrafish Gene Collection (ZGC) project"/>
        </authorList>
    </citation>
    <scope>NUCLEOTIDE SEQUENCE [LARGE SCALE MRNA] (ISOFORM 1)</scope>
    <source>
        <tissue>Brain</tissue>
    </source>
</reference>
<reference key="3">
    <citation type="journal article" date="2007" name="Curr. Biol.">
        <title>Orthopedia homeodomain protein is essential for diencephalic dopaminergic neuron development.</title>
        <authorList>
            <person name="Ryu S."/>
            <person name="Mahler J."/>
            <person name="Acampora D."/>
            <person name="Holzschuh J."/>
            <person name="Erhardt S."/>
            <person name="Omodei D."/>
            <person name="Simeone A."/>
            <person name="Driever W."/>
        </authorList>
    </citation>
    <scope>FUNCTION</scope>
</reference>
<reference key="4">
    <citation type="journal article" date="2007" name="Dev. Genes Evol.">
        <title>Zebrafish orthopedia (otp) is required for isotocin cell development.</title>
        <authorList>
            <person name="Eaton J.L."/>
            <person name="Glasgow E."/>
        </authorList>
    </citation>
    <scope>FUNCTION</scope>
    <scope>SUBCELLULAR LOCATION</scope>
    <scope>DEVELOPMENTAL STAGE</scope>
</reference>
<gene>
    <name type="primary">otpb</name>
    <name type="synonym">otp</name>
    <name type="synonym">otp1</name>
    <name type="synonym">otpa</name>
</gene>